<gene>
    <name type="primary">BDKRB1</name>
</gene>
<comment type="function">
    <text evidence="4">This is a receptor for bradykinin. Could be a factor in chronic pain and inflammation.</text>
</comment>
<comment type="subcellular location">
    <subcellularLocation>
        <location evidence="1">Cell membrane</location>
        <topology evidence="2">Multi-pass membrane protein</topology>
    </subcellularLocation>
</comment>
<comment type="similarity">
    <text evidence="3">Belongs to the G-protein coupled receptor 1 family. Bradykinin receptor subfamily. BDKRB1 sub-subfamily.</text>
</comment>
<feature type="chain" id="PRO_0000069179" description="B1 bradykinin receptor">
    <location>
        <begin position="1"/>
        <end position="350"/>
    </location>
</feature>
<feature type="topological domain" description="Extracellular" evidence="2">
    <location>
        <begin position="1"/>
        <end position="41"/>
    </location>
</feature>
<feature type="transmembrane region" description="Helical; Name=1" evidence="2">
    <location>
        <begin position="42"/>
        <end position="62"/>
    </location>
</feature>
<feature type="topological domain" description="Cytoplasmic" evidence="2">
    <location>
        <begin position="63"/>
        <end position="72"/>
    </location>
</feature>
<feature type="transmembrane region" description="Helical; Name=2" evidence="2">
    <location>
        <begin position="73"/>
        <end position="93"/>
    </location>
</feature>
<feature type="topological domain" description="Extracellular" evidence="2">
    <location>
        <begin position="94"/>
        <end position="110"/>
    </location>
</feature>
<feature type="transmembrane region" description="Helical; Name=3" evidence="2">
    <location>
        <begin position="111"/>
        <end position="131"/>
    </location>
</feature>
<feature type="topological domain" description="Cytoplasmic" evidence="2">
    <location>
        <begin position="132"/>
        <end position="150"/>
    </location>
</feature>
<feature type="transmembrane region" description="Helical; Name=4" evidence="2">
    <location>
        <begin position="151"/>
        <end position="171"/>
    </location>
</feature>
<feature type="topological domain" description="Extracellular" evidence="2">
    <location>
        <begin position="172"/>
        <end position="204"/>
    </location>
</feature>
<feature type="transmembrane region" description="Helical; Name=5" evidence="2">
    <location>
        <begin position="205"/>
        <end position="225"/>
    </location>
</feature>
<feature type="topological domain" description="Cytoplasmic" evidence="2">
    <location>
        <begin position="226"/>
        <end position="248"/>
    </location>
</feature>
<feature type="transmembrane region" description="Helical; Name=6" evidence="2">
    <location>
        <begin position="249"/>
        <end position="269"/>
    </location>
</feature>
<feature type="topological domain" description="Extracellular" evidence="2">
    <location>
        <begin position="270"/>
        <end position="292"/>
    </location>
</feature>
<feature type="transmembrane region" description="Helical; Name=7" evidence="2">
    <location>
        <begin position="293"/>
        <end position="313"/>
    </location>
</feature>
<feature type="topological domain" description="Cytoplasmic" evidence="2">
    <location>
        <begin position="314"/>
        <end position="350"/>
    </location>
</feature>
<feature type="lipid moiety-binding region" description="S-palmitoyl cysteine" evidence="2">
    <location>
        <position position="327"/>
    </location>
</feature>
<feature type="glycosylation site" description="N-linked (GlcNAc...) asparagine" evidence="2">
    <location>
        <position position="13"/>
    </location>
</feature>
<feature type="glycosylation site" description="N-linked (GlcNAc...) asparagine" evidence="2">
    <location>
        <position position="21"/>
    </location>
</feature>
<feature type="glycosylation site" description="N-linked (GlcNAc...) asparagine" evidence="2">
    <location>
        <position position="95"/>
    </location>
</feature>
<feature type="glycosylation site" description="N-linked (GlcNAc...) asparagine" evidence="2">
    <location>
        <position position="182"/>
    </location>
</feature>
<feature type="disulfide bond" evidence="3">
    <location>
        <begin position="109"/>
        <end position="186"/>
    </location>
</feature>
<dbReference type="EMBL" id="AF334947">
    <property type="protein sequence ID" value="AAK21216.1"/>
    <property type="molecule type" value="Genomic_DNA"/>
</dbReference>
<dbReference type="RefSeq" id="NP_001014306.1">
    <property type="nucleotide sequence ID" value="NM_001014284.1"/>
</dbReference>
<dbReference type="RefSeq" id="XP_038528850.1">
    <property type="nucleotide sequence ID" value="XM_038672922.1"/>
</dbReference>
<dbReference type="SMR" id="Q9BDQ5"/>
<dbReference type="FunCoup" id="Q9BDQ5">
    <property type="interactions" value="237"/>
</dbReference>
<dbReference type="BindingDB" id="Q9BDQ5"/>
<dbReference type="ChEMBL" id="CHEMBL4724"/>
<dbReference type="GlyCosmos" id="Q9BDQ5">
    <property type="glycosylation" value="4 sites, No reported glycans"/>
</dbReference>
<dbReference type="PaxDb" id="9612-ENSCAFP00000039552"/>
<dbReference type="Ensembl" id="ENSCAFT00030016449.1">
    <property type="protein sequence ID" value="ENSCAFP00030014368.1"/>
    <property type="gene ID" value="ENSCAFG00030008931.1"/>
</dbReference>
<dbReference type="Ensembl" id="ENSCAFT00040000241.1">
    <property type="protein sequence ID" value="ENSCAFP00040000184.1"/>
    <property type="gene ID" value="ENSCAFG00040000168.1"/>
</dbReference>
<dbReference type="Ensembl" id="ENSCAFT00845006349.1">
    <property type="protein sequence ID" value="ENSCAFP00845005045.1"/>
    <property type="gene ID" value="ENSCAFG00845003563.1"/>
</dbReference>
<dbReference type="GeneID" id="490847"/>
<dbReference type="KEGG" id="cfa:490847"/>
<dbReference type="CTD" id="623"/>
<dbReference type="VEuPathDB" id="HostDB:ENSCAFG00845003563"/>
<dbReference type="eggNOG" id="KOG3656">
    <property type="taxonomic scope" value="Eukaryota"/>
</dbReference>
<dbReference type="GeneTree" id="ENSGT01130000278308"/>
<dbReference type="InParanoid" id="Q9BDQ5"/>
<dbReference type="OrthoDB" id="6076970at2759"/>
<dbReference type="Reactome" id="R-CFA-375276">
    <property type="pathway name" value="Peptide ligand-binding receptors"/>
</dbReference>
<dbReference type="Reactome" id="R-CFA-416476">
    <property type="pathway name" value="G alpha (q) signalling events"/>
</dbReference>
<dbReference type="Reactome" id="R-CFA-418594">
    <property type="pathway name" value="G alpha (i) signalling events"/>
</dbReference>
<dbReference type="PRO" id="PR:Q9BDQ5"/>
<dbReference type="Proteomes" id="UP000002254">
    <property type="component" value="Unplaced"/>
</dbReference>
<dbReference type="Proteomes" id="UP000694429">
    <property type="component" value="Chromosome 8"/>
</dbReference>
<dbReference type="Proteomes" id="UP000694542">
    <property type="component" value="Chromosome 8"/>
</dbReference>
<dbReference type="Proteomes" id="UP000805418">
    <property type="component" value="Chromosome 8"/>
</dbReference>
<dbReference type="GO" id="GO:0005886">
    <property type="term" value="C:plasma membrane"/>
    <property type="evidence" value="ECO:0000318"/>
    <property type="project" value="GO_Central"/>
</dbReference>
<dbReference type="GO" id="GO:0004947">
    <property type="term" value="F:bradykinin receptor activity"/>
    <property type="evidence" value="ECO:0000318"/>
    <property type="project" value="GO_Central"/>
</dbReference>
<dbReference type="GO" id="GO:0042277">
    <property type="term" value="F:peptide binding"/>
    <property type="evidence" value="ECO:0007669"/>
    <property type="project" value="Ensembl"/>
</dbReference>
<dbReference type="GO" id="GO:0007186">
    <property type="term" value="P:G protein-coupled receptor signaling pathway"/>
    <property type="evidence" value="ECO:0000318"/>
    <property type="project" value="GO_Central"/>
</dbReference>
<dbReference type="GO" id="GO:0006954">
    <property type="term" value="P:inflammatory response"/>
    <property type="evidence" value="ECO:0007669"/>
    <property type="project" value="InterPro"/>
</dbReference>
<dbReference type="GO" id="GO:0032496">
    <property type="term" value="P:response to lipopolysaccharide"/>
    <property type="evidence" value="ECO:0007669"/>
    <property type="project" value="Ensembl"/>
</dbReference>
<dbReference type="GO" id="GO:0009612">
    <property type="term" value="P:response to mechanical stimulus"/>
    <property type="evidence" value="ECO:0007669"/>
    <property type="project" value="InterPro"/>
</dbReference>
<dbReference type="FunFam" id="1.20.1070.10:FF:000295">
    <property type="entry name" value="B1 bradykinin receptor"/>
    <property type="match status" value="1"/>
</dbReference>
<dbReference type="Gene3D" id="1.20.1070.10">
    <property type="entry name" value="Rhodopsin 7-helix transmembrane proteins"/>
    <property type="match status" value="1"/>
</dbReference>
<dbReference type="InterPro" id="IPR001186">
    <property type="entry name" value="Brdyknn_1_rcpt"/>
</dbReference>
<dbReference type="InterPro" id="IPR000496">
    <property type="entry name" value="Brdyknn_rcpt"/>
</dbReference>
<dbReference type="InterPro" id="IPR050119">
    <property type="entry name" value="CCR1-9-like"/>
</dbReference>
<dbReference type="InterPro" id="IPR000276">
    <property type="entry name" value="GPCR_Rhodpsn"/>
</dbReference>
<dbReference type="InterPro" id="IPR017452">
    <property type="entry name" value="GPCR_Rhodpsn_7TM"/>
</dbReference>
<dbReference type="PANTHER" id="PTHR10489:SF957">
    <property type="entry name" value="B2 BRADYKININ RECEPTOR"/>
    <property type="match status" value="1"/>
</dbReference>
<dbReference type="PANTHER" id="PTHR10489">
    <property type="entry name" value="CELL ADHESION MOLECULE"/>
    <property type="match status" value="1"/>
</dbReference>
<dbReference type="Pfam" id="PF00001">
    <property type="entry name" value="7tm_1"/>
    <property type="match status" value="1"/>
</dbReference>
<dbReference type="PRINTS" id="PR00425">
    <property type="entry name" value="BRADYKININR"/>
</dbReference>
<dbReference type="PRINTS" id="PR00993">
    <property type="entry name" value="BRADYKINNB1R"/>
</dbReference>
<dbReference type="PRINTS" id="PR00237">
    <property type="entry name" value="GPCRRHODOPSN"/>
</dbReference>
<dbReference type="SUPFAM" id="SSF81321">
    <property type="entry name" value="Family A G protein-coupled receptor-like"/>
    <property type="match status" value="1"/>
</dbReference>
<dbReference type="PROSITE" id="PS50262">
    <property type="entry name" value="G_PROTEIN_RECEP_F1_2"/>
    <property type="match status" value="1"/>
</dbReference>
<organism>
    <name type="scientific">Canis lupus familiaris</name>
    <name type="common">Dog</name>
    <name type="synonym">Canis familiaris</name>
    <dbReference type="NCBI Taxonomy" id="9615"/>
    <lineage>
        <taxon>Eukaryota</taxon>
        <taxon>Metazoa</taxon>
        <taxon>Chordata</taxon>
        <taxon>Craniata</taxon>
        <taxon>Vertebrata</taxon>
        <taxon>Euteleostomi</taxon>
        <taxon>Mammalia</taxon>
        <taxon>Eutheria</taxon>
        <taxon>Laurasiatheria</taxon>
        <taxon>Carnivora</taxon>
        <taxon>Caniformia</taxon>
        <taxon>Canidae</taxon>
        <taxon>Canis</taxon>
    </lineage>
</organism>
<sequence length="350" mass="39509">MASRAPLELLPLNRSQLSPPNATTCDDAPEAWDLLHRVLPSVIIIICVCGLLGNLLVLAVLLRPRRRLNVAEMYLANLAASDLVFVLGLPFWAANISNQFRWPFGGLLCRLVNGVIKANLFISIFLVVAISRDRYRALVHPMATRRRRQARATCVLIWVAGSLLSVPTFLFRSIEAVPELNNDSACVLLHPPGAWHVARMVELNVLGFLLPLAAIVFFNCHILASLRGRPEVRGARCGGPPDGRTTALILTFVAAFLVCWTPYHFFAFLEFLTQVQVVRGCFWENFKDLGLQYASFFAFINSCLNPVIYVFVGRLFRTRVWDLFKQCAPRRPPAVSWSHRKRVLQLFWQN</sequence>
<name>BKRB1_CANLF</name>
<protein>
    <recommendedName>
        <fullName>B1 bradykinin receptor</fullName>
        <shortName>B1R</shortName>
        <shortName>BK-1 receptor</shortName>
    </recommendedName>
</protein>
<keyword id="KW-1003">Cell membrane</keyword>
<keyword id="KW-1015">Disulfide bond</keyword>
<keyword id="KW-0297">G-protein coupled receptor</keyword>
<keyword id="KW-0325">Glycoprotein</keyword>
<keyword id="KW-0449">Lipoprotein</keyword>
<keyword id="KW-0472">Membrane</keyword>
<keyword id="KW-0564">Palmitate</keyword>
<keyword id="KW-0675">Receptor</keyword>
<keyword id="KW-1185">Reference proteome</keyword>
<keyword id="KW-0807">Transducer</keyword>
<keyword id="KW-0812">Transmembrane</keyword>
<keyword id="KW-1133">Transmembrane helix</keyword>
<evidence type="ECO:0000250" key="1">
    <source>
        <dbReference type="UniProtKB" id="P46663"/>
    </source>
</evidence>
<evidence type="ECO:0000255" key="2"/>
<evidence type="ECO:0000255" key="3">
    <source>
        <dbReference type="PROSITE-ProRule" id="PRU00521"/>
    </source>
</evidence>
<evidence type="ECO:0000269" key="4">
    <source>
    </source>
</evidence>
<proteinExistence type="evidence at transcript level"/>
<accession>Q9BDQ5</accession>
<reference key="1">
    <citation type="journal article" date="2001" name="Biol. Chem.">
        <title>Molecular cloning and pharmacological characterization of the canine B1 and B2 bradykinin receptors.</title>
        <authorList>
            <person name="Hess F."/>
            <person name="Hey P.J."/>
            <person name="Chen T.-B."/>
            <person name="O'Brien J."/>
            <person name="Omalley S.S."/>
            <person name="Pettibone D.J."/>
            <person name="Chang R.S.L."/>
        </authorList>
    </citation>
    <scope>NUCLEOTIDE SEQUENCE [MRNA]</scope>
    <scope>FUNCTION</scope>
</reference>